<sequence>MGASVSSDITNTITCNLQEASNTILNNQNLNDHQGIFVNIIKIGDGNINANNFAEKSNASIDINALANALNNSSMNEDLNKKIAQTAKAAIKGVNLMQLGDANTTINDIVNTSIKVKNTAIQNLIIRFDQKIKINIYHIGKGNIKVKNVHLKEIHKIITKEVENAKNNNKDVTKLIEQFSQATESKVEGFSLKILSLIIFSTAFLGLGGVYVGGKIAFPVTLLLSILAFYQYFNWTDRTIFTDGFVDTMFNIDNDGCEALKNLTIENVKSAKGASDRCLKNPKCVAYNWNHNTKKITMFKGVLEEGCKNDILKNNTNETLFERKKLIVREGKKDPIMSTNGDLYLNNKNQTLWYNYKKKKQNNWKELKNEKKIILDNSIKQGIDKFIKIIFGYEEKLPGPMPHTLYIDYSHNNHLKVFLCKLNFLIGKDFKNRDQSKDWTLISTIHLDIKMLDFEENDSCGVIVEQNKLWLLCVAVILLFIGIIGMGLGLKKNKN</sequence>
<name>458R_IIV6</name>
<keyword id="KW-0175">Coiled coil</keyword>
<keyword id="KW-0325">Glycoprotein</keyword>
<keyword id="KW-0449">Lipoprotein</keyword>
<keyword id="KW-0472">Membrane</keyword>
<keyword id="KW-0519">Myristate</keyword>
<keyword id="KW-1185">Reference proteome</keyword>
<keyword id="KW-0812">Transmembrane</keyword>
<keyword id="KW-1133">Transmembrane helix</keyword>
<reference key="1">
    <citation type="journal article" date="2001" name="Virology">
        <title>Analysis of the first complete DNA sequence of an invertebrate iridovirus: coding strategy of the genome of Chilo iridescent virus.</title>
        <authorList>
            <person name="Jakob N.J."/>
            <person name="Mueller K."/>
            <person name="Bahr U."/>
            <person name="Darai G."/>
        </authorList>
    </citation>
    <scope>NUCLEOTIDE SEQUENCE [LARGE SCALE GENOMIC DNA]</scope>
</reference>
<reference key="2">
    <citation type="journal article" date="2007" name="Virol. J.">
        <title>Comparative genomic analysis of the family Iridoviridae: re-annotating and defining the core set of iridovirus genes.</title>
        <authorList>
            <person name="Eaton H.E."/>
            <person name="Metcalf J."/>
            <person name="Penny E."/>
            <person name="Tcherepanov V."/>
            <person name="Upton C."/>
            <person name="Brunetti C.R."/>
        </authorList>
    </citation>
    <scope>GENOME REANNOTATION</scope>
</reference>
<organismHost>
    <name type="scientific">Acheta domesticus</name>
    <name type="common">House cricket</name>
    <dbReference type="NCBI Taxonomy" id="6997"/>
</organismHost>
<organismHost>
    <name type="scientific">Chilo suppressalis</name>
    <name type="common">Asiatic rice borer moth</name>
    <dbReference type="NCBI Taxonomy" id="168631"/>
</organismHost>
<organismHost>
    <name type="scientific">Gryllus bimaculatus</name>
    <name type="common">Two-spotted cricket</name>
    <dbReference type="NCBI Taxonomy" id="6999"/>
</organismHost>
<organismHost>
    <name type="scientific">Gryllus campestris</name>
    <dbReference type="NCBI Taxonomy" id="58607"/>
</organismHost>
<organismHost>
    <name type="scientific">Spodoptera frugiperda</name>
    <name type="common">Fall armyworm</name>
    <dbReference type="NCBI Taxonomy" id="7108"/>
</organismHost>
<protein>
    <recommendedName>
        <fullName>Putative myristoylated membrane protein 458R</fullName>
    </recommendedName>
</protein>
<proteinExistence type="inferred from homology"/>
<comment type="subcellular location">
    <subcellularLocation>
        <location evidence="2">Membrane</location>
        <topology evidence="2">Multi-pass membrane protein</topology>
    </subcellularLocation>
</comment>
<comment type="similarity">
    <text evidence="2">Belongs to the IIV-6 118L/458R family.</text>
</comment>
<evidence type="ECO:0000255" key="1"/>
<evidence type="ECO:0000305" key="2"/>
<accession>Q91F68</accession>
<organism>
    <name type="scientific">Invertebrate iridescent virus 6</name>
    <name type="common">IIV-6</name>
    <name type="synonym">Chilo iridescent virus</name>
    <dbReference type="NCBI Taxonomy" id="176652"/>
    <lineage>
        <taxon>Viruses</taxon>
        <taxon>Varidnaviria</taxon>
        <taxon>Bamfordvirae</taxon>
        <taxon>Nucleocytoviricota</taxon>
        <taxon>Megaviricetes</taxon>
        <taxon>Pimascovirales</taxon>
        <taxon>Iridoviridae</taxon>
        <taxon>Betairidovirinae</taxon>
        <taxon>Iridovirus</taxon>
    </lineage>
</organism>
<gene>
    <name type="ORF">IIV6-458R</name>
</gene>
<dbReference type="EMBL" id="AF303741">
    <property type="protein sequence ID" value="AAK82318.1"/>
    <property type="molecule type" value="Genomic_DNA"/>
</dbReference>
<dbReference type="RefSeq" id="NP_149921.1">
    <property type="nucleotide sequence ID" value="NC_003038.1"/>
</dbReference>
<dbReference type="KEGG" id="vg:1733283"/>
<dbReference type="Proteomes" id="UP000001359">
    <property type="component" value="Genome"/>
</dbReference>
<dbReference type="GO" id="GO:0016020">
    <property type="term" value="C:membrane"/>
    <property type="evidence" value="ECO:0007669"/>
    <property type="project" value="UniProtKB-SubCell"/>
</dbReference>
<feature type="initiator methionine" description="Removed" evidence="1">
    <location>
        <position position="1"/>
    </location>
</feature>
<feature type="chain" id="PRO_0000377895" description="Putative myristoylated membrane protein 458R">
    <location>
        <begin position="2"/>
        <end position="495"/>
    </location>
</feature>
<feature type="transmembrane region" description="Helical" evidence="1">
    <location>
        <begin position="194"/>
        <end position="214"/>
    </location>
</feature>
<feature type="transmembrane region" description="Helical" evidence="1">
    <location>
        <begin position="216"/>
        <end position="236"/>
    </location>
</feature>
<feature type="transmembrane region" description="Helical" evidence="1">
    <location>
        <begin position="469"/>
        <end position="489"/>
    </location>
</feature>
<feature type="coiled-coil region" evidence="1">
    <location>
        <begin position="150"/>
        <end position="182"/>
    </location>
</feature>
<feature type="lipid moiety-binding region" description="N-myristoyl glycine; by host" evidence="1">
    <location>
        <position position="2"/>
    </location>
</feature>
<feature type="glycosylation site" description="N-linked (GlcNAc...) asparagine; by host" evidence="1">
    <location>
        <position position="58"/>
    </location>
</feature>
<feature type="glycosylation site" description="N-linked (GlcNAc...) asparagine; by host" evidence="1">
    <location>
        <position position="71"/>
    </location>
</feature>
<feature type="glycosylation site" description="N-linked (GlcNAc...) asparagine; by host" evidence="1">
    <location>
        <position position="72"/>
    </location>
</feature>
<feature type="glycosylation site" description="N-linked (GlcNAc...) asparagine; by host" evidence="1">
    <location>
        <position position="103"/>
    </location>
</feature>
<feature type="glycosylation site" description="N-linked (GlcNAc...) asparagine; by host" evidence="1">
    <location>
        <position position="111"/>
    </location>
</feature>
<feature type="glycosylation site" description="N-linked (GlcNAc...) asparagine; by host" evidence="1">
    <location>
        <position position="262"/>
    </location>
</feature>
<feature type="glycosylation site" description="N-linked (GlcNAc...) asparagine; by host" evidence="1">
    <location>
        <position position="314"/>
    </location>
</feature>
<feature type="glycosylation site" description="N-linked (GlcNAc...) asparagine; by host" evidence="1">
    <location>
        <position position="317"/>
    </location>
</feature>
<feature type="glycosylation site" description="N-linked (GlcNAc...) asparagine; by host" evidence="1">
    <location>
        <position position="349"/>
    </location>
</feature>
<feature type="glycosylation site" description="N-linked (GlcNAc...) asparagine; by host" evidence="1">
    <location>
        <position position="457"/>
    </location>
</feature>